<organism>
    <name type="scientific">Homo sapiens</name>
    <name type="common">Human</name>
    <dbReference type="NCBI Taxonomy" id="9606"/>
    <lineage>
        <taxon>Eukaryota</taxon>
        <taxon>Metazoa</taxon>
        <taxon>Chordata</taxon>
        <taxon>Craniata</taxon>
        <taxon>Vertebrata</taxon>
        <taxon>Euteleostomi</taxon>
        <taxon>Mammalia</taxon>
        <taxon>Eutheria</taxon>
        <taxon>Euarchontoglires</taxon>
        <taxon>Primates</taxon>
        <taxon>Haplorrhini</taxon>
        <taxon>Catarrhini</taxon>
        <taxon>Hominidae</taxon>
        <taxon>Homo</taxon>
    </lineage>
</organism>
<comment type="function">
    <text evidence="9 10 13">Molecular tethering protein that connects endoplasmic reticulum and mitochondria membranes (PubMed:29097544). PDZD8-dependent endoplasmic reticulum-mitochondria membrane tethering is essential for endoplasmic reticulum-mitochondria Ca(2+) transfer (PubMed:29097544). In neurons, involved in the regulation of dendritic Ca(2+) dynamics by regulating mitochondrial Ca(2+) uptake in neurons (PubMed:29097544). Plays an indirect role in the regulation of cell morphology and cytoskeletal organization (PubMed:21834987). May inhibit herpes simplex virus 1 infection at an early stage (PubMed:21549406).</text>
</comment>
<comment type="subunit">
    <text evidence="9">Interacts with MSN.</text>
</comment>
<comment type="subunit">
    <text evidence="8">(Microbial infection) Interacts with HIV-1 Gag polyprotein p55.</text>
</comment>
<comment type="interaction">
    <interactant intactId="EBI-4289868">
        <id>Q8NEN9</id>
    </interactant>
    <interactant intactId="EBI-27033737">
        <id>A0A0F6AZQ1</id>
        <label>pipB</label>
    </interactant>
    <organismsDiffer>true</organismsDiffer>
    <experiments>8</experiments>
</comment>
<comment type="subcellular location">
    <subcellularLocation>
        <location evidence="13">Endoplasmic reticulum membrane</location>
        <topology evidence="3">Single-pass membrane protein</topology>
    </subcellularLocation>
    <text evidence="13">Localizes at mitochondria-endoplasmic reticulum contact sites.</text>
</comment>
<comment type="domain">
    <text evidence="1">The SMP-LTD domain is a barrel-like domain that binds phospholipids.</text>
</comment>
<comment type="disease" evidence="14">
    <disease id="DI-06496">
        <name>Intellectual developmental disorder with autism and dysmorphic facies</name>
        <acronym>IDDADF</acronym>
        <description>An autosomal recessive neurodevelopmental disorder characterized by moderate to severe intellectual disability with autistic features, myopathy, and facial dysmorphism.</description>
        <dbReference type="MIM" id="620021"/>
    </disease>
    <text>The disease is caused by variants affecting the gene represented in this entry.</text>
</comment>
<comment type="caution">
    <text evidence="8 11 12">(Microbial infection) Was initially reported to enhance infectivity of retroviruses, such as HIV-1, by stabilizing the capsid of retroviruses (PubMed:20573829, PubMed:24554657). However, it was later shown that PDZD8 is not absolutely required for HIV-1 infection, suggesting that its role in retroviral infection is probably indirect (PubMed:25771112).</text>
</comment>
<comment type="sequence caution" evidence="16">
    <conflict type="frameshift">
        <sequence resource="EMBL-CDS" id="AAO65182"/>
    </conflict>
</comment>
<protein>
    <recommendedName>
        <fullName evidence="16">PDZ domain-containing protein 8</fullName>
    </recommendedName>
    <alternativeName>
        <fullName evidence="15">Sarcoma antigen NY-SAR-84/NY-SAR-104</fullName>
    </alternativeName>
</protein>
<dbReference type="EMBL" id="AL391988">
    <property type="status" value="NOT_ANNOTATED_CDS"/>
    <property type="molecule type" value="Genomic_DNA"/>
</dbReference>
<dbReference type="EMBL" id="AL359836">
    <property type="status" value="NOT_ANNOTATED_CDS"/>
    <property type="molecule type" value="Genomic_DNA"/>
</dbReference>
<dbReference type="EMBL" id="BC028375">
    <property type="protein sequence ID" value="AAH28375.1"/>
    <property type="molecule type" value="mRNA"/>
</dbReference>
<dbReference type="EMBL" id="AY211924">
    <property type="protein sequence ID" value="AAO65177.1"/>
    <property type="molecule type" value="mRNA"/>
</dbReference>
<dbReference type="EMBL" id="AY211929">
    <property type="protein sequence ID" value="AAO65182.1"/>
    <property type="status" value="ALT_FRAME"/>
    <property type="molecule type" value="mRNA"/>
</dbReference>
<dbReference type="EMBL" id="AL122051">
    <property type="protein sequence ID" value="CAB59184.1"/>
    <property type="molecule type" value="mRNA"/>
</dbReference>
<dbReference type="CCDS" id="CCDS7600.1"/>
<dbReference type="PIR" id="T34546">
    <property type="entry name" value="T34546"/>
</dbReference>
<dbReference type="RefSeq" id="NP_776152.1">
    <property type="nucleotide sequence ID" value="NM_173791.5"/>
</dbReference>
<dbReference type="PDB" id="7F6J">
    <property type="method" value="X-ray"/>
    <property type="resolution" value="2.10 A"/>
    <property type="chains" value="C=994-1123"/>
</dbReference>
<dbReference type="PDBsum" id="7F6J"/>
<dbReference type="SMR" id="Q8NEN9"/>
<dbReference type="BioGRID" id="125631">
    <property type="interactions" value="460"/>
</dbReference>
<dbReference type="FunCoup" id="Q8NEN9">
    <property type="interactions" value="1282"/>
</dbReference>
<dbReference type="IntAct" id="Q8NEN9">
    <property type="interactions" value="240"/>
</dbReference>
<dbReference type="MINT" id="Q8NEN9"/>
<dbReference type="STRING" id="9606.ENSP00000334642"/>
<dbReference type="TCDB" id="1.R.1.1.1">
    <property type="family name" value="the membrane contact site (mcs) family"/>
</dbReference>
<dbReference type="GlyGen" id="Q8NEN9">
    <property type="glycosylation" value="3 sites, 1 N-linked glycan (1 site), 1 O-linked glycan (1 site)"/>
</dbReference>
<dbReference type="iPTMnet" id="Q8NEN9"/>
<dbReference type="PhosphoSitePlus" id="Q8NEN9"/>
<dbReference type="SwissPalm" id="Q8NEN9"/>
<dbReference type="BioMuta" id="PDZD8"/>
<dbReference type="DMDM" id="73621383"/>
<dbReference type="jPOST" id="Q8NEN9"/>
<dbReference type="MassIVE" id="Q8NEN9"/>
<dbReference type="PaxDb" id="9606-ENSP00000334642"/>
<dbReference type="PeptideAtlas" id="Q8NEN9"/>
<dbReference type="ProteomicsDB" id="73189"/>
<dbReference type="Pumba" id="Q8NEN9"/>
<dbReference type="Antibodypedia" id="2575">
    <property type="antibodies" value="75 antibodies from 16 providers"/>
</dbReference>
<dbReference type="DNASU" id="118987"/>
<dbReference type="Ensembl" id="ENST00000334464.7">
    <property type="protein sequence ID" value="ENSP00000334642.5"/>
    <property type="gene ID" value="ENSG00000165650.12"/>
</dbReference>
<dbReference type="GeneID" id="118987"/>
<dbReference type="KEGG" id="hsa:118987"/>
<dbReference type="MANE-Select" id="ENST00000334464.7">
    <property type="protein sequence ID" value="ENSP00000334642.5"/>
    <property type="RefSeq nucleotide sequence ID" value="NM_173791.5"/>
    <property type="RefSeq protein sequence ID" value="NP_776152.1"/>
</dbReference>
<dbReference type="UCSC" id="uc001lde.2">
    <property type="organism name" value="human"/>
</dbReference>
<dbReference type="AGR" id="HGNC:26974"/>
<dbReference type="CTD" id="118987"/>
<dbReference type="DisGeNET" id="118987"/>
<dbReference type="GeneCards" id="PDZD8"/>
<dbReference type="HGNC" id="HGNC:26974">
    <property type="gene designation" value="PDZD8"/>
</dbReference>
<dbReference type="HPA" id="ENSG00000165650">
    <property type="expression patterns" value="Tissue enhanced (bone)"/>
</dbReference>
<dbReference type="MalaCards" id="PDZD8"/>
<dbReference type="MIM" id="614235">
    <property type="type" value="gene"/>
</dbReference>
<dbReference type="MIM" id="620021">
    <property type="type" value="phenotype"/>
</dbReference>
<dbReference type="neXtProt" id="NX_Q8NEN9"/>
<dbReference type="OpenTargets" id="ENSG00000165650"/>
<dbReference type="PharmGKB" id="PA134916380"/>
<dbReference type="VEuPathDB" id="HostDB:ENSG00000165650"/>
<dbReference type="eggNOG" id="KOG3532">
    <property type="taxonomic scope" value="Eukaryota"/>
</dbReference>
<dbReference type="GeneTree" id="ENSGT00390000017746"/>
<dbReference type="HOGENOM" id="CLU_008594_0_0_1"/>
<dbReference type="InParanoid" id="Q8NEN9"/>
<dbReference type="OMA" id="HIALECM"/>
<dbReference type="OrthoDB" id="10004596at2759"/>
<dbReference type="PAN-GO" id="Q8NEN9">
    <property type="GO annotations" value="3 GO annotations based on evolutionary models"/>
</dbReference>
<dbReference type="PhylomeDB" id="Q8NEN9"/>
<dbReference type="TreeFam" id="TF324166"/>
<dbReference type="PathwayCommons" id="Q8NEN9"/>
<dbReference type="SignaLink" id="Q8NEN9"/>
<dbReference type="SIGNOR" id="Q8NEN9"/>
<dbReference type="BioGRID-ORCS" id="118987">
    <property type="hits" value="7 hits in 1151 CRISPR screens"/>
</dbReference>
<dbReference type="ChiTaRS" id="PDZD8">
    <property type="organism name" value="human"/>
</dbReference>
<dbReference type="GenomeRNAi" id="118987"/>
<dbReference type="Pharos" id="Q8NEN9">
    <property type="development level" value="Tbio"/>
</dbReference>
<dbReference type="PRO" id="PR:Q8NEN9"/>
<dbReference type="Proteomes" id="UP000005640">
    <property type="component" value="Chromosome 10"/>
</dbReference>
<dbReference type="RNAct" id="Q8NEN9">
    <property type="molecule type" value="protein"/>
</dbReference>
<dbReference type="Bgee" id="ENSG00000165650">
    <property type="expression patterns" value="Expressed in sperm and 204 other cell types or tissues"/>
</dbReference>
<dbReference type="GO" id="GO:0005789">
    <property type="term" value="C:endoplasmic reticulum membrane"/>
    <property type="evidence" value="ECO:0000314"/>
    <property type="project" value="UniProtKB"/>
</dbReference>
<dbReference type="GO" id="GO:0016020">
    <property type="term" value="C:membrane"/>
    <property type="evidence" value="ECO:0007005"/>
    <property type="project" value="UniProtKB"/>
</dbReference>
<dbReference type="GO" id="GO:0044233">
    <property type="term" value="C:mitochondria-associated endoplasmic reticulum membrane contact site"/>
    <property type="evidence" value="ECO:0000314"/>
    <property type="project" value="UniProtKB"/>
</dbReference>
<dbReference type="GO" id="GO:0005739">
    <property type="term" value="C:mitochondrion"/>
    <property type="evidence" value="ECO:0007669"/>
    <property type="project" value="GOC"/>
</dbReference>
<dbReference type="GO" id="GO:0008289">
    <property type="term" value="F:lipid binding"/>
    <property type="evidence" value="ECO:0007669"/>
    <property type="project" value="UniProtKB-KW"/>
</dbReference>
<dbReference type="GO" id="GO:0008270">
    <property type="term" value="F:zinc ion binding"/>
    <property type="evidence" value="ECO:0007669"/>
    <property type="project" value="UniProtKB-KW"/>
</dbReference>
<dbReference type="GO" id="GO:0007010">
    <property type="term" value="P:cytoskeleton organization"/>
    <property type="evidence" value="ECO:0000315"/>
    <property type="project" value="UniProtKB"/>
</dbReference>
<dbReference type="GO" id="GO:0006869">
    <property type="term" value="P:lipid transport"/>
    <property type="evidence" value="ECO:0007669"/>
    <property type="project" value="UniProtKB-KW"/>
</dbReference>
<dbReference type="GO" id="GO:0051560">
    <property type="term" value="P:mitochondrial calcium ion homeostasis"/>
    <property type="evidence" value="ECO:0000314"/>
    <property type="project" value="UniProtKB"/>
</dbReference>
<dbReference type="GO" id="GO:1990456">
    <property type="term" value="P:mitochondrion-endoplasmic reticulum membrane tethering"/>
    <property type="evidence" value="ECO:0000314"/>
    <property type="project" value="UniProtKB"/>
</dbReference>
<dbReference type="GO" id="GO:0022604">
    <property type="term" value="P:regulation of cell morphogenesis"/>
    <property type="evidence" value="ECO:0000315"/>
    <property type="project" value="UniProtKB"/>
</dbReference>
<dbReference type="CDD" id="cd20825">
    <property type="entry name" value="C1_PDZD8"/>
    <property type="match status" value="1"/>
</dbReference>
<dbReference type="CDD" id="cd00136">
    <property type="entry name" value="PDZ_canonical"/>
    <property type="match status" value="1"/>
</dbReference>
<dbReference type="CDD" id="cd21674">
    <property type="entry name" value="SMP_PDZD8"/>
    <property type="match status" value="1"/>
</dbReference>
<dbReference type="FunFam" id="3.30.60.20:FF:000055">
    <property type="entry name" value="PDZ domain-containing protein 8"/>
    <property type="match status" value="1"/>
</dbReference>
<dbReference type="Gene3D" id="2.30.42.10">
    <property type="match status" value="1"/>
</dbReference>
<dbReference type="Gene3D" id="3.30.60.20">
    <property type="match status" value="1"/>
</dbReference>
<dbReference type="InterPro" id="IPR046349">
    <property type="entry name" value="C1-like_sf"/>
</dbReference>
<dbReference type="InterPro" id="IPR001478">
    <property type="entry name" value="PDZ"/>
</dbReference>
<dbReference type="InterPro" id="IPR041489">
    <property type="entry name" value="PDZ_6"/>
</dbReference>
<dbReference type="InterPro" id="IPR036034">
    <property type="entry name" value="PDZ_sf"/>
</dbReference>
<dbReference type="InterPro" id="IPR039275">
    <property type="entry name" value="PDZD8"/>
</dbReference>
<dbReference type="InterPro" id="IPR002219">
    <property type="entry name" value="PE/DAG-bd"/>
</dbReference>
<dbReference type="InterPro" id="IPR031468">
    <property type="entry name" value="SMP_LBD"/>
</dbReference>
<dbReference type="PANTHER" id="PTHR21519">
    <property type="entry name" value="PDZ DOMAIN-CONTAINING PROTEIN 8"/>
    <property type="match status" value="1"/>
</dbReference>
<dbReference type="PANTHER" id="PTHR21519:SF1">
    <property type="entry name" value="PDZ DOMAIN-CONTAINING PROTEIN 8"/>
    <property type="match status" value="1"/>
</dbReference>
<dbReference type="Pfam" id="PF00130">
    <property type="entry name" value="C1_1"/>
    <property type="match status" value="1"/>
</dbReference>
<dbReference type="Pfam" id="PF17820">
    <property type="entry name" value="PDZ_6"/>
    <property type="match status" value="1"/>
</dbReference>
<dbReference type="SMART" id="SM00109">
    <property type="entry name" value="C1"/>
    <property type="match status" value="1"/>
</dbReference>
<dbReference type="SMART" id="SM00228">
    <property type="entry name" value="PDZ"/>
    <property type="match status" value="1"/>
</dbReference>
<dbReference type="SUPFAM" id="SSF57889">
    <property type="entry name" value="Cysteine-rich domain"/>
    <property type="match status" value="1"/>
</dbReference>
<dbReference type="SUPFAM" id="SSF50156">
    <property type="entry name" value="PDZ domain-like"/>
    <property type="match status" value="1"/>
</dbReference>
<dbReference type="PROSITE" id="PS50106">
    <property type="entry name" value="PDZ"/>
    <property type="match status" value="1"/>
</dbReference>
<dbReference type="PROSITE" id="PS51847">
    <property type="entry name" value="SMP"/>
    <property type="match status" value="1"/>
</dbReference>
<dbReference type="PROSITE" id="PS50081">
    <property type="entry name" value="ZF_DAG_PE_2"/>
    <property type="match status" value="1"/>
</dbReference>
<sequence length="1154" mass="128563">MGLLLMILASAVLGSFLTLLAQFFLLYRRQPEPPADEAARAGEGFRYIKPVPGLLLREYLYGGGRDEEPSGAAPEGGATPTAAPETPAPPTRETCYFLNATILFLFRELRDTALTRRWVTKKIKVEFEELLQTKTAGRLLEGLSLRDVFLGETVPFIKTIRLVRPVVPSATGEPDGPEGEALPAACPEELAFEAEVEYNGGFHLAIDVDLVFGKSAYLFVKLSRVVGRLRLVFTRVPFTHWFFSFVEDPLIDFEVRSQFEGRPMPQLTSIIVNQLKKIIKRKHTLPNYKIRFKPFFPYQTLQGFEEDEEHIHIQQWALTEGRLKVTLLECSRLLIFGSYDREANVHCTLELSSSVWEEKQRSSIKTVELIKGNLQSVGLTLRLVQSTDGYAGHVIIETVAPNSPAAIADLQRGDRLIAIGGVKITSTLQVLKLIKQAGDRVLVYYERPVGQSNQGAVLQDNFGQLEENFLSSSCQSGYEEEAAGLTVDTESRELDSEFEDLASDVRAQNEFKDEAQSLSHSPKRVPTTLSIKPLGAISPVLNRKLAVGSHPLPPKIQSKDGNKPPPLKTSEITDPAQVSKPTQGSAFKPPVPPRPQAKVPLPSADAPNQAEPDVLVEKPEKVVPPPLVDKSAEKQAKNVDAIDDAAAPKQFLAKQEVAKDVTSETSCPTKDSSDDRQTWESSEILYRNKLGKWTRTRASCLFDIEACHRYLNIALWCRDPFKLGGLICLGHVSLKLEDVALGCLATSNTEYLSKLRLEAPSPKAIVTRTALRNLSMQKGFNDKFCYGDITIHFKYLKEGESDHHVVTNVEKEKEPHLVEEVSVLPKEEQFVGQMGLTENKHSFQDTQFQNPTWCDYCKKKVWTKAASQCMFCAYVCHKKCQEKCLAETSVCGATDRRIDRTLKNLRLEGQETLLGLPPRVDAEASKSVNKTTGLTRHIINTSSRLLNLRQVSKTRLSEPGTDLVEPSPKHTPNTSDNEGSDTEVCGPNSPSKRGNSTGIKLVRKEGGLDDSVFIAVKEIGRDLYRGLPTEERIQKLEFMLDKLQNEIDQELEHNNSLVREEKETTDTRKKSLLSAALAKSGERLQALTLLMIHYRAGIEDIETLESLSLDQHSKKISKYTDDTEEDLDNEISQLIDSQPFSSISDDLFGPSESV</sequence>
<gene>
    <name evidence="18" type="primary">PDZD8</name>
    <name type="synonym">PDZK8</name>
</gene>
<name>PDZD8_HUMAN</name>
<keyword id="KW-0002">3D-structure</keyword>
<keyword id="KW-1268">Autism spectrum disorder</keyword>
<keyword id="KW-0175">Coiled coil</keyword>
<keyword id="KW-0225">Disease variant</keyword>
<keyword id="KW-0256">Endoplasmic reticulum</keyword>
<keyword id="KW-0945">Host-virus interaction</keyword>
<keyword id="KW-0991">Intellectual disability</keyword>
<keyword id="KW-0445">Lipid transport</keyword>
<keyword id="KW-0446">Lipid-binding</keyword>
<keyword id="KW-0472">Membrane</keyword>
<keyword id="KW-0479">Metal-binding</keyword>
<keyword id="KW-0597">Phosphoprotein</keyword>
<keyword id="KW-1267">Proteomics identification</keyword>
<keyword id="KW-1185">Reference proteome</keyword>
<keyword id="KW-0812">Transmembrane</keyword>
<keyword id="KW-1133">Transmembrane helix</keyword>
<keyword id="KW-0813">Transport</keyword>
<keyword id="KW-0862">Zinc</keyword>
<keyword id="KW-0863">Zinc-finger</keyword>
<reference key="1">
    <citation type="journal article" date="2004" name="Nature">
        <title>The DNA sequence and comparative analysis of human chromosome 10.</title>
        <authorList>
            <person name="Deloukas P."/>
            <person name="Earthrowl M.E."/>
            <person name="Grafham D.V."/>
            <person name="Rubenfield M."/>
            <person name="French L."/>
            <person name="Steward C.A."/>
            <person name="Sims S.K."/>
            <person name="Jones M.C."/>
            <person name="Searle S."/>
            <person name="Scott C."/>
            <person name="Howe K."/>
            <person name="Hunt S.E."/>
            <person name="Andrews T.D."/>
            <person name="Gilbert J.G.R."/>
            <person name="Swarbreck D."/>
            <person name="Ashurst J.L."/>
            <person name="Taylor A."/>
            <person name="Battles J."/>
            <person name="Bird C.P."/>
            <person name="Ainscough R."/>
            <person name="Almeida J.P."/>
            <person name="Ashwell R.I.S."/>
            <person name="Ambrose K.D."/>
            <person name="Babbage A.K."/>
            <person name="Bagguley C.L."/>
            <person name="Bailey J."/>
            <person name="Banerjee R."/>
            <person name="Bates K."/>
            <person name="Beasley H."/>
            <person name="Bray-Allen S."/>
            <person name="Brown A.J."/>
            <person name="Brown J.Y."/>
            <person name="Burford D.C."/>
            <person name="Burrill W."/>
            <person name="Burton J."/>
            <person name="Cahill P."/>
            <person name="Camire D."/>
            <person name="Carter N.P."/>
            <person name="Chapman J.C."/>
            <person name="Clark S.Y."/>
            <person name="Clarke G."/>
            <person name="Clee C.M."/>
            <person name="Clegg S."/>
            <person name="Corby N."/>
            <person name="Coulson A."/>
            <person name="Dhami P."/>
            <person name="Dutta I."/>
            <person name="Dunn M."/>
            <person name="Faulkner L."/>
            <person name="Frankish A."/>
            <person name="Frankland J.A."/>
            <person name="Garner P."/>
            <person name="Garnett J."/>
            <person name="Gribble S."/>
            <person name="Griffiths C."/>
            <person name="Grocock R."/>
            <person name="Gustafson E."/>
            <person name="Hammond S."/>
            <person name="Harley J.L."/>
            <person name="Hart E."/>
            <person name="Heath P.D."/>
            <person name="Ho T.P."/>
            <person name="Hopkins B."/>
            <person name="Horne J."/>
            <person name="Howden P.J."/>
            <person name="Huckle E."/>
            <person name="Hynds C."/>
            <person name="Johnson C."/>
            <person name="Johnson D."/>
            <person name="Kana A."/>
            <person name="Kay M."/>
            <person name="Kimberley A.M."/>
            <person name="Kershaw J.K."/>
            <person name="Kokkinaki M."/>
            <person name="Laird G.K."/>
            <person name="Lawlor S."/>
            <person name="Lee H.M."/>
            <person name="Leongamornlert D.A."/>
            <person name="Laird G."/>
            <person name="Lloyd C."/>
            <person name="Lloyd D.M."/>
            <person name="Loveland J."/>
            <person name="Lovell J."/>
            <person name="McLaren S."/>
            <person name="McLay K.E."/>
            <person name="McMurray A."/>
            <person name="Mashreghi-Mohammadi M."/>
            <person name="Matthews L."/>
            <person name="Milne S."/>
            <person name="Nickerson T."/>
            <person name="Nguyen M."/>
            <person name="Overton-Larty E."/>
            <person name="Palmer S.A."/>
            <person name="Pearce A.V."/>
            <person name="Peck A.I."/>
            <person name="Pelan S."/>
            <person name="Phillimore B."/>
            <person name="Porter K."/>
            <person name="Rice C.M."/>
            <person name="Rogosin A."/>
            <person name="Ross M.T."/>
            <person name="Sarafidou T."/>
            <person name="Sehra H.K."/>
            <person name="Shownkeen R."/>
            <person name="Skuce C.D."/>
            <person name="Smith M."/>
            <person name="Standring L."/>
            <person name="Sycamore N."/>
            <person name="Tester J."/>
            <person name="Thorpe A."/>
            <person name="Torcasso W."/>
            <person name="Tracey A."/>
            <person name="Tromans A."/>
            <person name="Tsolas J."/>
            <person name="Wall M."/>
            <person name="Walsh J."/>
            <person name="Wang H."/>
            <person name="Weinstock K."/>
            <person name="West A.P."/>
            <person name="Willey D.L."/>
            <person name="Whitehead S.L."/>
            <person name="Wilming L."/>
            <person name="Wray P.W."/>
            <person name="Young L."/>
            <person name="Chen Y."/>
            <person name="Lovering R.C."/>
            <person name="Moschonas N.K."/>
            <person name="Siebert R."/>
            <person name="Fechtel K."/>
            <person name="Bentley D."/>
            <person name="Durbin R.M."/>
            <person name="Hubbard T."/>
            <person name="Doucette-Stamm L."/>
            <person name="Beck S."/>
            <person name="Smith D.R."/>
            <person name="Rogers J."/>
        </authorList>
    </citation>
    <scope>NUCLEOTIDE SEQUENCE [LARGE SCALE GENOMIC DNA]</scope>
</reference>
<reference key="2">
    <citation type="journal article" date="2004" name="Genome Res.">
        <title>The status, quality, and expansion of the NIH full-length cDNA project: the Mammalian Gene Collection (MGC).</title>
        <authorList>
            <consortium name="The MGC Project Team"/>
        </authorList>
    </citation>
    <scope>NUCLEOTIDE SEQUENCE [LARGE SCALE MRNA]</scope>
    <source>
        <tissue>Testis</tissue>
    </source>
</reference>
<reference key="3">
    <citation type="journal article" date="2003" name="Proc. Natl. Acad. Sci. U.S.A.">
        <title>Immunomic analysis of human sarcoma.</title>
        <authorList>
            <person name="Lee S.-Y."/>
            <person name="Obata Y."/>
            <person name="Yoshida M."/>
            <person name="Stockert E."/>
            <person name="Williamson B."/>
            <person name="Jungbluth A.A."/>
            <person name="Chen Y.-T."/>
            <person name="Old L.J."/>
            <person name="Scanlan M.J."/>
        </authorList>
    </citation>
    <scope>NUCLEOTIDE SEQUENCE [MRNA] OF 232-491 AND 1007-1154</scope>
</reference>
<reference key="4">
    <citation type="journal article" date="2007" name="BMC Genomics">
        <title>The full-ORF clone resource of the German cDNA consortium.</title>
        <authorList>
            <person name="Bechtel S."/>
            <person name="Rosenfelder H."/>
            <person name="Duda A."/>
            <person name="Schmidt C.P."/>
            <person name="Ernst U."/>
            <person name="Wellenreuther R."/>
            <person name="Mehrle A."/>
            <person name="Schuster C."/>
            <person name="Bahr A."/>
            <person name="Bloecker H."/>
            <person name="Heubner D."/>
            <person name="Hoerlein A."/>
            <person name="Michel G."/>
            <person name="Wedler H."/>
            <person name="Koehrer K."/>
            <person name="Ottenwaelder B."/>
            <person name="Poustka A."/>
            <person name="Wiemann S."/>
            <person name="Schupp I."/>
        </authorList>
    </citation>
    <scope>NUCLEOTIDE SEQUENCE [LARGE SCALE MRNA] OF 642-1154</scope>
    <source>
        <tissue>Testis</tissue>
    </source>
</reference>
<reference key="5">
    <citation type="journal article" date="2008" name="Proc. Natl. Acad. Sci. U.S.A.">
        <title>A quantitative atlas of mitotic phosphorylation.</title>
        <authorList>
            <person name="Dephoure N."/>
            <person name="Zhou C."/>
            <person name="Villen J."/>
            <person name="Beausoleil S.A."/>
            <person name="Bakalarski C.E."/>
            <person name="Elledge S.J."/>
            <person name="Gygi S.P."/>
        </authorList>
    </citation>
    <scope>PHOSPHORYLATION [LARGE SCALE ANALYSIS] AT SER-496 AND SER-538</scope>
    <scope>IDENTIFICATION BY MASS SPECTROMETRY [LARGE SCALE ANALYSIS]</scope>
    <source>
        <tissue>Cervix carcinoma</tissue>
    </source>
</reference>
<reference key="6">
    <citation type="journal article" date="2009" name="Sci. Signal.">
        <title>Quantitative phosphoproteomic analysis of T cell receptor signaling reveals system-wide modulation of protein-protein interactions.</title>
        <authorList>
            <person name="Mayya V."/>
            <person name="Lundgren D.H."/>
            <person name="Hwang S.-I."/>
            <person name="Rezaul K."/>
            <person name="Wu L."/>
            <person name="Eng J.K."/>
            <person name="Rodionov V."/>
            <person name="Han D.K."/>
        </authorList>
    </citation>
    <scope>PHOSPHORYLATION [LARGE SCALE ANALYSIS] AT SER-496</scope>
    <scope>IDENTIFICATION BY MASS SPECTROMETRY [LARGE SCALE ANALYSIS]</scope>
    <source>
        <tissue>Leukemic T-cell</tissue>
    </source>
</reference>
<reference key="7">
    <citation type="journal article" date="2010" name="J. Virol.">
        <title>PDZD8 is a novel Gag-interacting factor that promotes retroviral infection.</title>
        <authorList>
            <person name="Henning M.S."/>
            <person name="Morham S.G."/>
            <person name="Goff S.P."/>
            <person name="Naghavi M.H."/>
        </authorList>
    </citation>
    <scope>CAUTION</scope>
    <scope>INTERACTION WITH HIV-1 GAG (MICROBIAL INFECTION)</scope>
</reference>
<reference key="8">
    <citation type="journal article" date="2011" name="BMC Biol.">
        <title>Identification and characterization of a set of conserved and new regulators of cytoskeletal organisation, cell morphology and migration.</title>
        <authorList>
            <person name="Bai S.W."/>
            <person name="Herrera-Abreu M.T."/>
            <person name="Rohn J.L."/>
            <person name="Racine V."/>
            <person name="Tajadura V."/>
            <person name="Suryavanshi N."/>
            <person name="Bechtel S."/>
            <person name="Wiemann S."/>
            <person name="Baum B."/>
            <person name="Ridley A.J."/>
        </authorList>
    </citation>
    <scope>FUNCTION</scope>
</reference>
<reference key="9">
    <citation type="journal article" date="2011" name="Virology">
        <title>PDZD8 is a novel moesin-interacting cytoskeletal regulatory protein that suppresses infection by herpes simplex virus type 1.</title>
        <authorList>
            <person name="Henning M.S."/>
            <person name="Stiedl P."/>
            <person name="Barry D.S."/>
            <person name="McMahon R."/>
            <person name="Morham S.G."/>
            <person name="Walsh D."/>
            <person name="Naghavi M.H."/>
        </authorList>
    </citation>
    <scope>FUNCTION</scope>
    <scope>INTERACTION WITH MSN</scope>
</reference>
<reference key="10">
    <citation type="journal article" date="2013" name="J. Proteome Res.">
        <title>Toward a comprehensive characterization of a human cancer cell phosphoproteome.</title>
        <authorList>
            <person name="Zhou H."/>
            <person name="Di Palma S."/>
            <person name="Preisinger C."/>
            <person name="Peng M."/>
            <person name="Polat A.N."/>
            <person name="Heck A.J."/>
            <person name="Mohammed S."/>
        </authorList>
    </citation>
    <scope>PHOSPHORYLATION [LARGE SCALE ANALYSIS] AT SER-496; SER-521; SER-538 AND SER-967</scope>
    <scope>IDENTIFICATION BY MASS SPECTROMETRY [LARGE SCALE ANALYSIS]</scope>
    <source>
        <tissue>Cervix carcinoma</tissue>
        <tissue>Erythroleukemia</tissue>
    </source>
</reference>
<reference key="11">
    <citation type="journal article" date="2014" name="J. Virol.">
        <title>Contribution of PDZD8 to stabilization of the human immunodeficiency virus type 1 capsid.</title>
        <authorList>
            <person name="Guth C.A."/>
            <person name="Sodroski J."/>
        </authorList>
    </citation>
    <scope>CAUTION</scope>
</reference>
<reference key="12">
    <citation type="journal article" date="2015" name="Virology">
        <title>Efficient human immunodeficiency virus (HIV-1) infection of cells lacking PDZD8.</title>
        <authorList>
            <person name="Zhang S."/>
            <person name="Sodroski J."/>
        </authorList>
    </citation>
    <scope>CAUTION</scope>
</reference>
<reference key="13">
    <citation type="journal article" date="2017" name="Science">
        <title>ER-mitochondria tethering by PDZD8 regulates Ca(2+) dynamics in mammalian neurons.</title>
        <authorList>
            <person name="Hirabayashi Y."/>
            <person name="Kwon S.K."/>
            <person name="Paek H."/>
            <person name="Pernice W.M."/>
            <person name="Paul M.A."/>
            <person name="Lee J."/>
            <person name="Erfani P."/>
            <person name="Raczkowski A."/>
            <person name="Petrey D.S."/>
            <person name="Pon L.A."/>
            <person name="Polleux F."/>
        </authorList>
    </citation>
    <scope>FUNCTION</scope>
    <scope>SUBCELLULAR LOCATION</scope>
</reference>
<reference key="14">
    <citation type="journal article" date="2022" name="Biol. Psychiatry">
        <title>PDZD8 disruption causes cognitive impairment in humans, mice, and fruit flies.</title>
        <authorList>
            <person name="Al-Amri A.H."/>
            <person name="Armstrong P."/>
            <person name="Amici M."/>
            <person name="Ligneul C."/>
            <person name="Rouse J."/>
            <person name="El-Asrag M.E."/>
            <person name="Pantiru A."/>
            <person name="Vancollie V.E."/>
            <person name="Ng H.W.Y."/>
            <person name="Ogbeta J.A."/>
            <person name="Goodchild K."/>
            <person name="Ellegood J."/>
            <person name="Lelliott C.J."/>
            <person name="Mullins J.G.L."/>
            <person name="Bretman A."/>
            <person name="Al-Ali R."/>
            <person name="Beetz C."/>
            <person name="Al-Gazali L."/>
            <person name="Al Shamsi A."/>
            <person name="Lerch J.P."/>
            <person name="Mellor J.R."/>
            <person name="Al Sayegh A."/>
            <person name="Ali M."/>
            <person name="Inglehearn C.F."/>
            <person name="Clapcote S.J."/>
        </authorList>
    </citation>
    <scope>INVOLVEMENT IN IDDADF</scope>
    <scope>VARIANT IDDADF 298-TYR--VAL-1154 DEL</scope>
</reference>
<evidence type="ECO:0000250" key="1">
    <source>
        <dbReference type="UniProtKB" id="A0FGR8"/>
    </source>
</evidence>
<evidence type="ECO:0000250" key="2">
    <source>
        <dbReference type="UniProtKB" id="B9EJ80"/>
    </source>
</evidence>
<evidence type="ECO:0000255" key="3"/>
<evidence type="ECO:0000255" key="4">
    <source>
        <dbReference type="PROSITE-ProRule" id="PRU00143"/>
    </source>
</evidence>
<evidence type="ECO:0000255" key="5">
    <source>
        <dbReference type="PROSITE-ProRule" id="PRU00226"/>
    </source>
</evidence>
<evidence type="ECO:0000255" key="6">
    <source>
        <dbReference type="PROSITE-ProRule" id="PRU01194"/>
    </source>
</evidence>
<evidence type="ECO:0000256" key="7">
    <source>
        <dbReference type="SAM" id="MobiDB-lite"/>
    </source>
</evidence>
<evidence type="ECO:0000269" key="8">
    <source>
    </source>
</evidence>
<evidence type="ECO:0000269" key="9">
    <source>
    </source>
</evidence>
<evidence type="ECO:0000269" key="10">
    <source>
    </source>
</evidence>
<evidence type="ECO:0000269" key="11">
    <source>
    </source>
</evidence>
<evidence type="ECO:0000269" key="12">
    <source>
    </source>
</evidence>
<evidence type="ECO:0000269" key="13">
    <source>
    </source>
</evidence>
<evidence type="ECO:0000269" key="14">
    <source>
    </source>
</evidence>
<evidence type="ECO:0000303" key="15">
    <source>
    </source>
</evidence>
<evidence type="ECO:0000305" key="16"/>
<evidence type="ECO:0000305" key="17">
    <source>
    </source>
</evidence>
<evidence type="ECO:0000312" key="18">
    <source>
        <dbReference type="HGNC" id="HGNC:26974"/>
    </source>
</evidence>
<evidence type="ECO:0007744" key="19">
    <source>
    </source>
</evidence>
<evidence type="ECO:0007744" key="20">
    <source>
    </source>
</evidence>
<evidence type="ECO:0007744" key="21">
    <source>
    </source>
</evidence>
<evidence type="ECO:0007829" key="22">
    <source>
        <dbReference type="PDB" id="7F6J"/>
    </source>
</evidence>
<accession>Q8NEN9</accession>
<accession>Q86WE0</accession>
<accession>Q86WE5</accession>
<accession>Q9UFF1</accession>
<proteinExistence type="evidence at protein level"/>
<feature type="chain" id="PRO_0000058299" description="PDZ domain-containing protein 8">
    <location>
        <begin position="1"/>
        <end position="1154"/>
    </location>
</feature>
<feature type="transmembrane region" description="Helical" evidence="3">
    <location>
        <begin position="2"/>
        <end position="24"/>
    </location>
</feature>
<feature type="domain" description="SMP-LTD" evidence="6 17">
    <location>
        <begin position="91"/>
        <end position="294"/>
    </location>
</feature>
<feature type="domain" description="PDZ" evidence="4">
    <location>
        <begin position="366"/>
        <end position="449"/>
    </location>
</feature>
<feature type="zinc finger region" description="Phorbol-ester/DAG-type" evidence="5">
    <location>
        <begin position="840"/>
        <end position="891"/>
    </location>
</feature>
<feature type="region of interest" description="Disordered" evidence="7">
    <location>
        <begin position="66"/>
        <end position="90"/>
    </location>
</feature>
<feature type="region of interest" description="Disordered" evidence="7">
    <location>
        <begin position="548"/>
        <end position="612"/>
    </location>
</feature>
<feature type="region of interest" description="Disordered" evidence="7">
    <location>
        <begin position="955"/>
        <end position="999"/>
    </location>
</feature>
<feature type="region of interest" description="Disordered" evidence="7">
    <location>
        <begin position="1132"/>
        <end position="1154"/>
    </location>
</feature>
<feature type="coiled-coil region" evidence="3">
    <location>
        <begin position="1028"/>
        <end position="1063"/>
    </location>
</feature>
<feature type="compositionally biased region" description="Low complexity" evidence="7">
    <location>
        <begin position="70"/>
        <end position="85"/>
    </location>
</feature>
<feature type="compositionally biased region" description="Polar residues" evidence="7">
    <location>
        <begin position="988"/>
        <end position="998"/>
    </location>
</feature>
<feature type="compositionally biased region" description="Polar residues" evidence="7">
    <location>
        <begin position="1132"/>
        <end position="1144"/>
    </location>
</feature>
<feature type="modified residue" description="Phosphoserine" evidence="19 20 21">
    <location>
        <position position="496"/>
    </location>
</feature>
<feature type="modified residue" description="Phosphoserine" evidence="21">
    <location>
        <position position="521"/>
    </location>
</feature>
<feature type="modified residue" description="Phosphoserine" evidence="19 21">
    <location>
        <position position="538"/>
    </location>
</feature>
<feature type="modified residue" description="Phosphoserine" evidence="21">
    <location>
        <position position="967"/>
    </location>
</feature>
<feature type="modified residue" description="Phosphoserine" evidence="2">
    <location>
        <position position="980"/>
    </location>
</feature>
<feature type="sequence variant" id="VAR_087700" description="In IDDADF." evidence="14">
    <location>
        <begin position="298"/>
        <end position="1154"/>
    </location>
</feature>
<feature type="sequence variant" id="VAR_051265" description="In dbSNP:rs35664484.">
    <original>V</original>
    <variation>A</variation>
    <location>
        <position position="806"/>
    </location>
</feature>
<feature type="sequence variant" id="VAR_051266" description="In dbSNP:rs363294.">
    <original>R</original>
    <variation>Q</variation>
    <location>
        <position position="897"/>
    </location>
</feature>
<feature type="sequence conflict" description="In Ref. 3; AAO65182." evidence="16" ref="3">
    <original>V</original>
    <variation>G</variation>
    <location>
        <position position="232"/>
    </location>
</feature>
<feature type="sequence conflict" description="In Ref. 3; AAO65182." evidence="16" ref="3">
    <original>A</original>
    <variation>T</variation>
    <location>
        <position position="482"/>
    </location>
</feature>
<feature type="sequence conflict" description="In Ref. 3; AAO65182." evidence="16" ref="3">
    <original>D</original>
    <variation>N</variation>
    <location>
        <position position="488"/>
    </location>
</feature>
<feature type="sequence conflict" description="In Ref. 3; AAO65182." evidence="16" ref="3">
    <original>S</original>
    <variation>K</variation>
    <location>
        <position position="491"/>
    </location>
</feature>
<feature type="sequence conflict" description="In Ref. 4; CAB59184." evidence="16" ref="4">
    <original>S</original>
    <variation>F</variation>
    <location>
        <position position="666"/>
    </location>
</feature>
<feature type="sequence conflict" description="In Ref. 3; AAO65177." evidence="16" ref="3">
    <original>GL</original>
    <variation>RG</variation>
    <location>
        <begin position="1007"/>
        <end position="1008"/>
    </location>
</feature>
<feature type="helix" evidence="22">
    <location>
        <begin position="1010"/>
        <end position="1020"/>
    </location>
</feature>
<feature type="turn" evidence="22">
    <location>
        <begin position="1021"/>
        <end position="1026"/>
    </location>
</feature>
<feature type="helix" evidence="22">
    <location>
        <begin position="1029"/>
        <end position="1063"/>
    </location>
</feature>
<feature type="helix" evidence="22">
    <location>
        <begin position="1067"/>
        <end position="1103"/>
    </location>
</feature>